<name>NU6M_TACAC</name>
<sequence length="166" mass="17983">MMYFIYLLSVMLVLSFMAFASNPSPIYGGLSLVLSGGVGCGIIVSLGGSFLGLIVFLVYLGGMLVVFGYTAAMATEEYPETWVDYTVVLNLAIMVGMLGVVWYEFFEEVDLGVGYDLLDLGGMEVLGGDFNGVSLLYACGGWELVFSGWILFLTIFVVLEVTRGEH</sequence>
<reference key="1">
    <citation type="journal article" date="2002" name="J. Mol. Evol.">
        <title>Phylogenetic analysis of 18S rRNA and the mitochondrial genomes of the wombat, Vombatus ursinus, and the spiny anteater, Tachyglossus aculeatus: increased support for the Marsupionta hypothesis.</title>
        <authorList>
            <person name="Janke A."/>
            <person name="Magnell O."/>
            <person name="Wieczorek G."/>
            <person name="Westerman M."/>
            <person name="Arnason U."/>
        </authorList>
    </citation>
    <scope>NUCLEOTIDE SEQUENCE [GENOMIC DNA]</scope>
    <source>
        <tissue>Liver</tissue>
    </source>
</reference>
<gene>
    <name type="primary">MT-ND6</name>
    <name type="synonym">MTND6</name>
    <name type="synonym">NADH6</name>
    <name type="synonym">ND6</name>
</gene>
<organism>
    <name type="scientific">Tachyglossus aculeatus aculeatus</name>
    <name type="common">Southeast Australian short-beaked echidna</name>
    <dbReference type="NCBI Taxonomy" id="49271"/>
    <lineage>
        <taxon>Eukaryota</taxon>
        <taxon>Metazoa</taxon>
        <taxon>Chordata</taxon>
        <taxon>Craniata</taxon>
        <taxon>Vertebrata</taxon>
        <taxon>Euteleostomi</taxon>
        <taxon>Mammalia</taxon>
        <taxon>Monotremata</taxon>
        <taxon>Tachyglossidae</taxon>
        <taxon>Tachyglossus</taxon>
    </lineage>
</organism>
<feature type="chain" id="PRO_0000118341" description="NADH-ubiquinone oxidoreductase chain 6">
    <location>
        <begin position="1"/>
        <end position="166"/>
    </location>
</feature>
<feature type="transmembrane region" description="Helical" evidence="3">
    <location>
        <begin position="1"/>
        <end position="21"/>
    </location>
</feature>
<feature type="transmembrane region" description="Helical" evidence="3">
    <location>
        <begin position="26"/>
        <end position="46"/>
    </location>
</feature>
<feature type="transmembrane region" description="Helical" evidence="3">
    <location>
        <begin position="47"/>
        <end position="67"/>
    </location>
</feature>
<feature type="transmembrane region" description="Helical" evidence="3">
    <location>
        <begin position="86"/>
        <end position="106"/>
    </location>
</feature>
<feature type="transmembrane region" description="Helical" evidence="3">
    <location>
        <begin position="139"/>
        <end position="159"/>
    </location>
</feature>
<evidence type="ECO:0000250" key="1">
    <source>
        <dbReference type="UniProtKB" id="P03923"/>
    </source>
</evidence>
<evidence type="ECO:0000250" key="2">
    <source>
        <dbReference type="UniProtKB" id="P03924"/>
    </source>
</evidence>
<evidence type="ECO:0000255" key="3"/>
<evidence type="ECO:0000305" key="4"/>
<comment type="function">
    <text evidence="1">Core subunit of the mitochondrial membrane respiratory chain NADH dehydrogenase (Complex I) which catalyzes electron transfer from NADH through the respiratory chain, using ubiquinone as an electron acceptor. Essential for the catalytic activity and assembly of complex I.</text>
</comment>
<comment type="catalytic activity">
    <reaction evidence="1">
        <text>a ubiquinone + NADH + 5 H(+)(in) = a ubiquinol + NAD(+) + 4 H(+)(out)</text>
        <dbReference type="Rhea" id="RHEA:29091"/>
        <dbReference type="Rhea" id="RHEA-COMP:9565"/>
        <dbReference type="Rhea" id="RHEA-COMP:9566"/>
        <dbReference type="ChEBI" id="CHEBI:15378"/>
        <dbReference type="ChEBI" id="CHEBI:16389"/>
        <dbReference type="ChEBI" id="CHEBI:17976"/>
        <dbReference type="ChEBI" id="CHEBI:57540"/>
        <dbReference type="ChEBI" id="CHEBI:57945"/>
        <dbReference type="EC" id="7.1.1.2"/>
    </reaction>
</comment>
<comment type="subunit">
    <text evidence="2">Core subunit of respiratory chain NADH dehydrogenase (Complex I) which is composed of 45 different subunits.</text>
</comment>
<comment type="subcellular location">
    <subcellularLocation>
        <location evidence="2">Mitochondrion inner membrane</location>
        <topology evidence="3">Multi-pass membrane protein</topology>
    </subcellularLocation>
</comment>
<comment type="similarity">
    <text evidence="4">Belongs to the complex I subunit 6 family.</text>
</comment>
<protein>
    <recommendedName>
        <fullName>NADH-ubiquinone oxidoreductase chain 6</fullName>
        <ecNumber evidence="1">7.1.1.2</ecNumber>
    </recommendedName>
    <alternativeName>
        <fullName>NADH dehydrogenase subunit 6</fullName>
    </alternativeName>
</protein>
<dbReference type="EC" id="7.1.1.2" evidence="1"/>
<dbReference type="EMBL" id="AJ303116">
    <property type="protein sequence ID" value="CAC88021.1"/>
    <property type="molecule type" value="Genomic_DNA"/>
</dbReference>
<dbReference type="RefSeq" id="NP_542241.1">
    <property type="nucleotide sequence ID" value="NC_003321.1"/>
</dbReference>
<dbReference type="SMR" id="Q8W9G2"/>
<dbReference type="GeneID" id="804512"/>
<dbReference type="CTD" id="4541"/>
<dbReference type="GO" id="GO:0005743">
    <property type="term" value="C:mitochondrial inner membrane"/>
    <property type="evidence" value="ECO:0000250"/>
    <property type="project" value="UniProtKB"/>
</dbReference>
<dbReference type="GO" id="GO:0008137">
    <property type="term" value="F:NADH dehydrogenase (ubiquinone) activity"/>
    <property type="evidence" value="ECO:0000250"/>
    <property type="project" value="UniProtKB"/>
</dbReference>
<dbReference type="GO" id="GO:0006120">
    <property type="term" value="P:mitochondrial electron transport, NADH to ubiquinone"/>
    <property type="evidence" value="ECO:0000250"/>
    <property type="project" value="UniProtKB"/>
</dbReference>
<dbReference type="GO" id="GO:0032981">
    <property type="term" value="P:mitochondrial respiratory chain complex I assembly"/>
    <property type="evidence" value="ECO:0000250"/>
    <property type="project" value="UniProtKB"/>
</dbReference>
<dbReference type="Gene3D" id="1.20.120.1200">
    <property type="entry name" value="NADH-ubiquinone/plastoquinone oxidoreductase chain 6, subunit NuoJ"/>
    <property type="match status" value="1"/>
</dbReference>
<dbReference type="InterPro" id="IPR050269">
    <property type="entry name" value="ComplexI_Subunit6"/>
</dbReference>
<dbReference type="InterPro" id="IPR001457">
    <property type="entry name" value="NADH_UbQ/plastoQ_OxRdtase_su6"/>
</dbReference>
<dbReference type="InterPro" id="IPR042106">
    <property type="entry name" value="Nuo/plastoQ_OxRdtase_6_NuoJ"/>
</dbReference>
<dbReference type="PANTHER" id="PTHR11435">
    <property type="entry name" value="NADH UBIQUINONE OXIDOREDUCTASE SUBUNIT ND6"/>
    <property type="match status" value="1"/>
</dbReference>
<dbReference type="PANTHER" id="PTHR11435:SF1">
    <property type="entry name" value="NADH-UBIQUINONE OXIDOREDUCTASE CHAIN 6"/>
    <property type="match status" value="1"/>
</dbReference>
<dbReference type="Pfam" id="PF00499">
    <property type="entry name" value="Oxidored_q3"/>
    <property type="match status" value="1"/>
</dbReference>
<accession>Q8W9G2</accession>
<geneLocation type="mitochondrion"/>
<keyword id="KW-0249">Electron transport</keyword>
<keyword id="KW-0472">Membrane</keyword>
<keyword id="KW-0496">Mitochondrion</keyword>
<keyword id="KW-0999">Mitochondrion inner membrane</keyword>
<keyword id="KW-0520">NAD</keyword>
<keyword id="KW-0679">Respiratory chain</keyword>
<keyword id="KW-1278">Translocase</keyword>
<keyword id="KW-0812">Transmembrane</keyword>
<keyword id="KW-1133">Transmembrane helix</keyword>
<keyword id="KW-0813">Transport</keyword>
<keyword id="KW-0830">Ubiquinone</keyword>
<proteinExistence type="inferred from homology"/>